<name>YCFP_SALDC</name>
<comment type="similarity">
    <text evidence="1">Belongs to the UPF0227 family.</text>
</comment>
<gene>
    <name evidence="1" type="primary">ycfP</name>
    <name type="ordered locus">SeD_A2159</name>
</gene>
<dbReference type="EMBL" id="CP001144">
    <property type="protein sequence ID" value="ACH75972.1"/>
    <property type="molecule type" value="Genomic_DNA"/>
</dbReference>
<dbReference type="RefSeq" id="WP_000587945.1">
    <property type="nucleotide sequence ID" value="NC_011205.1"/>
</dbReference>
<dbReference type="SMR" id="B5FK97"/>
<dbReference type="ESTHER" id="salty-ycfp">
    <property type="family name" value="abh_upf00227"/>
</dbReference>
<dbReference type="KEGG" id="sed:SeD_A2159"/>
<dbReference type="HOGENOM" id="CLU_128769_0_0_6"/>
<dbReference type="Proteomes" id="UP000008322">
    <property type="component" value="Chromosome"/>
</dbReference>
<dbReference type="FunFam" id="3.40.50.1820:FF:000007">
    <property type="entry name" value="UPF0227 protein YcfP"/>
    <property type="match status" value="1"/>
</dbReference>
<dbReference type="Gene3D" id="3.40.50.1820">
    <property type="entry name" value="alpha/beta hydrolase"/>
    <property type="match status" value="1"/>
</dbReference>
<dbReference type="HAMAP" id="MF_01047">
    <property type="entry name" value="UPF0227"/>
    <property type="match status" value="1"/>
</dbReference>
<dbReference type="InterPro" id="IPR029058">
    <property type="entry name" value="AB_hydrolase_fold"/>
</dbReference>
<dbReference type="InterPro" id="IPR022987">
    <property type="entry name" value="UPF0227"/>
</dbReference>
<dbReference type="InterPro" id="IPR008886">
    <property type="entry name" value="UPF0227/Esterase_YqiA"/>
</dbReference>
<dbReference type="NCBIfam" id="NF003431">
    <property type="entry name" value="PRK04940.1"/>
    <property type="match status" value="1"/>
</dbReference>
<dbReference type="PANTHER" id="PTHR35602">
    <property type="entry name" value="ESTERASE YQIA-RELATED"/>
    <property type="match status" value="1"/>
</dbReference>
<dbReference type="PANTHER" id="PTHR35602:SF2">
    <property type="entry name" value="UPF0227 PROTEIN YCFP"/>
    <property type="match status" value="1"/>
</dbReference>
<dbReference type="Pfam" id="PF05728">
    <property type="entry name" value="UPF0227"/>
    <property type="match status" value="1"/>
</dbReference>
<dbReference type="SUPFAM" id="SSF53474">
    <property type="entry name" value="alpha/beta-Hydrolases"/>
    <property type="match status" value="1"/>
</dbReference>
<accession>B5FK97</accession>
<proteinExistence type="inferred from homology"/>
<sequence length="180" mass="21093">MIIYLHGFDSNSPGNHEKVLQLQFIDPDVRLVSYSTRHPKHDMQHLLKEVDKMLQLNVDERPLICGVGLGGYWAERIGFLCDIRQVVFNPNLFPYENMEGKIDRPEEYADIATKCVTNFREKNRDRCLVILSRHDEALDSQRSAQALHPYYEIVWDEEQTHKFKNISPHLQRIKAFKTLG</sequence>
<organism>
    <name type="scientific">Salmonella dublin (strain CT_02021853)</name>
    <dbReference type="NCBI Taxonomy" id="439851"/>
    <lineage>
        <taxon>Bacteria</taxon>
        <taxon>Pseudomonadati</taxon>
        <taxon>Pseudomonadota</taxon>
        <taxon>Gammaproteobacteria</taxon>
        <taxon>Enterobacterales</taxon>
        <taxon>Enterobacteriaceae</taxon>
        <taxon>Salmonella</taxon>
    </lineage>
</organism>
<protein>
    <recommendedName>
        <fullName evidence="1">UPF0227 protein YcfP</fullName>
    </recommendedName>
</protein>
<evidence type="ECO:0000255" key="1">
    <source>
        <dbReference type="HAMAP-Rule" id="MF_01047"/>
    </source>
</evidence>
<feature type="chain" id="PRO_1000136195" description="UPF0227 protein YcfP">
    <location>
        <begin position="1"/>
        <end position="180"/>
    </location>
</feature>
<reference key="1">
    <citation type="journal article" date="2011" name="J. Bacteriol.">
        <title>Comparative genomics of 28 Salmonella enterica isolates: evidence for CRISPR-mediated adaptive sublineage evolution.</title>
        <authorList>
            <person name="Fricke W.F."/>
            <person name="Mammel M.K."/>
            <person name="McDermott P.F."/>
            <person name="Tartera C."/>
            <person name="White D.G."/>
            <person name="Leclerc J.E."/>
            <person name="Ravel J."/>
            <person name="Cebula T.A."/>
        </authorList>
    </citation>
    <scope>NUCLEOTIDE SEQUENCE [LARGE SCALE GENOMIC DNA]</scope>
    <source>
        <strain>CT_02021853</strain>
    </source>
</reference>